<accession>Q6DGG9</accession>
<accession>F7FMD6</accession>
<accession>Q9ERK1</accession>
<comment type="function">
    <text evidence="1 2 6">Required for the post-translational delivery of tail-anchored (TA) proteins to the endoplasmic reticulum (PubMed:23041287). Together with GET1/WRB, acts as a membrane receptor for soluble GET3/TRC40, which recognizes and selectively binds the transmembrane domain of TA proteins in the cytosol (PubMed:23041287). Required for the stability of GET1 (By similarity). Stimulates calcium signaling in T cells through its involvement in elevation of intracellular calcium (By similarity). Essential for the survival of peripheral follicular B cells (By similarity).</text>
</comment>
<comment type="subunit">
    <text evidence="1 6">Component of the Golgi to ER traffic (GET) complex, which is composed of GET1/WRB, CAMLG/GET2 and GET3/TRC40 (PubMed:23041287). Within the complex, GET1 and CAMLG form a heterotetramer which is stabilized by phosphatidylinositol binding and which binds to the GET3 homodimer (By similarity). Interacts (via C-terminus) with GET1 (PubMed:23041287). Interacts (via N-terminus) with GET3 (PubMed:23041287). GET3 shows a higher affinity for CAMLG than for GET1 (By similarity). Interacts (via N-terminus) with TNFRSF13B/TACI (via C-terminus) (By similarity).</text>
</comment>
<comment type="subcellular location">
    <subcellularLocation>
        <location evidence="1">Endoplasmic reticulum membrane</location>
        <topology evidence="3">Multi-pass membrane protein</topology>
    </subcellularLocation>
</comment>
<comment type="tissue specificity">
    <text evidence="5">In the central nervous system, expressed in astrocytes, microglia and neurons (at protein level).</text>
</comment>
<protein>
    <recommendedName>
        <fullName evidence="8">Guided entry of tail-anchored proteins factor CAMLG</fullName>
    </recommendedName>
    <alternativeName>
        <fullName evidence="1">Calcium signal-modulating cyclophilin ligand</fullName>
    </alternativeName>
</protein>
<keyword id="KW-1015">Disulfide bond</keyword>
<keyword id="KW-0256">Endoplasmic reticulum</keyword>
<keyword id="KW-0931">ER-Golgi transport</keyword>
<keyword id="KW-0472">Membrane</keyword>
<keyword id="KW-0597">Phosphoprotein</keyword>
<keyword id="KW-1185">Reference proteome</keyword>
<keyword id="KW-0812">Transmembrane</keyword>
<keyword id="KW-1133">Transmembrane helix</keyword>
<keyword id="KW-0813">Transport</keyword>
<name>CAMLG_RAT</name>
<proteinExistence type="evidence at protein level"/>
<dbReference type="EMBL" id="AF302085">
    <property type="protein sequence ID" value="AAG21394.1"/>
    <property type="molecule type" value="mRNA"/>
</dbReference>
<dbReference type="EMBL" id="AC139608">
    <property type="status" value="NOT_ANNOTATED_CDS"/>
    <property type="molecule type" value="Genomic_DNA"/>
</dbReference>
<dbReference type="EMBL" id="CH474032">
    <property type="protein sequence ID" value="EDL93961.1"/>
    <property type="molecule type" value="Genomic_DNA"/>
</dbReference>
<dbReference type="EMBL" id="BC076377">
    <property type="protein sequence ID" value="AAH76377.1"/>
    <property type="molecule type" value="mRNA"/>
</dbReference>
<dbReference type="RefSeq" id="NP_001385655.1">
    <property type="nucleotide sequence ID" value="NM_001398726.1"/>
</dbReference>
<dbReference type="RefSeq" id="NP_445786.1">
    <property type="nucleotide sequence ID" value="NM_053334.1"/>
</dbReference>
<dbReference type="RefSeq" id="XP_006253720.1">
    <property type="nucleotide sequence ID" value="XM_006253658.3"/>
</dbReference>
<dbReference type="SMR" id="Q6DGG9"/>
<dbReference type="FunCoup" id="Q6DGG9">
    <property type="interactions" value="2723"/>
</dbReference>
<dbReference type="IntAct" id="Q6DGG9">
    <property type="interactions" value="1"/>
</dbReference>
<dbReference type="STRING" id="10116.ENSRNOP00000033945"/>
<dbReference type="iPTMnet" id="Q6DGG9"/>
<dbReference type="PhosphoSitePlus" id="Q6DGG9"/>
<dbReference type="jPOST" id="Q6DGG9"/>
<dbReference type="PaxDb" id="10116-ENSRNOP00000033945"/>
<dbReference type="GeneID" id="81715"/>
<dbReference type="KEGG" id="rno:81715"/>
<dbReference type="AGR" id="RGD:69297"/>
<dbReference type="CTD" id="819"/>
<dbReference type="RGD" id="69297">
    <property type="gene designation" value="Camlg"/>
</dbReference>
<dbReference type="VEuPathDB" id="HostDB:ENSRNOG00000021911"/>
<dbReference type="eggNOG" id="ENOG502QVCE">
    <property type="taxonomic scope" value="Eukaryota"/>
</dbReference>
<dbReference type="HOGENOM" id="CLU_081881_0_0_1"/>
<dbReference type="InParanoid" id="Q6DGG9"/>
<dbReference type="PhylomeDB" id="Q6DGG9"/>
<dbReference type="TreeFam" id="TF331902"/>
<dbReference type="PRO" id="PR:Q6DGG9"/>
<dbReference type="Proteomes" id="UP000002494">
    <property type="component" value="Chromosome 17"/>
</dbReference>
<dbReference type="Proteomes" id="UP000234681">
    <property type="component" value="Chromosome 17"/>
</dbReference>
<dbReference type="GO" id="GO:0005737">
    <property type="term" value="C:cytoplasm"/>
    <property type="evidence" value="ECO:0000266"/>
    <property type="project" value="RGD"/>
</dbReference>
<dbReference type="GO" id="GO:0005783">
    <property type="term" value="C:endoplasmic reticulum"/>
    <property type="evidence" value="ECO:0000250"/>
    <property type="project" value="UniProtKB"/>
</dbReference>
<dbReference type="GO" id="GO:0005789">
    <property type="term" value="C:endoplasmic reticulum membrane"/>
    <property type="evidence" value="ECO:0000250"/>
    <property type="project" value="UniProtKB"/>
</dbReference>
<dbReference type="GO" id="GO:0043529">
    <property type="term" value="C:GET complex"/>
    <property type="evidence" value="ECO:0000353"/>
    <property type="project" value="UniProtKB"/>
</dbReference>
<dbReference type="GO" id="GO:0050839">
    <property type="term" value="F:cell adhesion molecule binding"/>
    <property type="evidence" value="ECO:0000353"/>
    <property type="project" value="RGD"/>
</dbReference>
<dbReference type="GO" id="GO:0031625">
    <property type="term" value="F:ubiquitin protein ligase binding"/>
    <property type="evidence" value="ECO:0000266"/>
    <property type="project" value="RGD"/>
</dbReference>
<dbReference type="GO" id="GO:0001782">
    <property type="term" value="P:B cell homeostasis"/>
    <property type="evidence" value="ECO:0000250"/>
    <property type="project" value="UniProtKB"/>
</dbReference>
<dbReference type="GO" id="GO:0007173">
    <property type="term" value="P:epidermal growth factor receptor signaling pathway"/>
    <property type="evidence" value="ECO:0000266"/>
    <property type="project" value="RGD"/>
</dbReference>
<dbReference type="GO" id="GO:0032435">
    <property type="term" value="P:negative regulation of proteasomal ubiquitin-dependent protein catabolic process"/>
    <property type="evidence" value="ECO:0000266"/>
    <property type="project" value="RGD"/>
</dbReference>
<dbReference type="GO" id="GO:0031397">
    <property type="term" value="P:negative regulation of protein ubiquitination"/>
    <property type="evidence" value="ECO:0000266"/>
    <property type="project" value="RGD"/>
</dbReference>
<dbReference type="GO" id="GO:0050821">
    <property type="term" value="P:protein stabilization"/>
    <property type="evidence" value="ECO:0000250"/>
    <property type="project" value="UniProtKB"/>
</dbReference>
<dbReference type="GO" id="GO:0001881">
    <property type="term" value="P:receptor recycling"/>
    <property type="evidence" value="ECO:0000266"/>
    <property type="project" value="RGD"/>
</dbReference>
<dbReference type="GO" id="GO:0071816">
    <property type="term" value="P:tail-anchored membrane protein insertion into ER membrane"/>
    <property type="evidence" value="ECO:0000314"/>
    <property type="project" value="UniProtKB"/>
</dbReference>
<dbReference type="GO" id="GO:0016192">
    <property type="term" value="P:vesicle-mediated transport"/>
    <property type="evidence" value="ECO:0007669"/>
    <property type="project" value="UniProtKB-KW"/>
</dbReference>
<dbReference type="InterPro" id="IPR016719">
    <property type="entry name" value="CAMLG"/>
</dbReference>
<dbReference type="PANTHER" id="PTHR15026">
    <property type="entry name" value="CALCIUM-SIGNAL MODULATING CYCLOPHILIN LIGAND CAML"/>
    <property type="match status" value="1"/>
</dbReference>
<dbReference type="PANTHER" id="PTHR15026:SF0">
    <property type="entry name" value="GUIDED ENTRY OF TAIL-ANCHORED PROTEINS FACTOR CAMLG"/>
    <property type="match status" value="1"/>
</dbReference>
<dbReference type="Pfam" id="PF14963">
    <property type="entry name" value="Get2_like"/>
    <property type="match status" value="1"/>
</dbReference>
<dbReference type="PIRSF" id="PIRSF018259">
    <property type="entry name" value="CAML"/>
    <property type="match status" value="1"/>
</dbReference>
<reference evidence="9" key="1">
    <citation type="journal article" date="2001" name="DNA Seq.">
        <title>Cloning of rat calcium-modulating cyclophilin ligand.</title>
        <authorList>
            <person name="Lee S.J."/>
            <person name="Drabik K."/>
            <person name="Benveniste E.N."/>
        </authorList>
    </citation>
    <scope>NUCLEOTIDE SEQUENCE [MRNA]</scope>
    <scope>TISSUE SPECIFICITY</scope>
</reference>
<reference evidence="12" key="2">
    <citation type="journal article" date="2004" name="Nature">
        <title>Genome sequence of the Brown Norway rat yields insights into mammalian evolution.</title>
        <authorList>
            <person name="Gibbs R.A."/>
            <person name="Weinstock G.M."/>
            <person name="Metzker M.L."/>
            <person name="Muzny D.M."/>
            <person name="Sodergren E.J."/>
            <person name="Scherer S."/>
            <person name="Scott G."/>
            <person name="Steffen D."/>
            <person name="Worley K.C."/>
            <person name="Burch P.E."/>
            <person name="Okwuonu G."/>
            <person name="Hines S."/>
            <person name="Lewis L."/>
            <person name="Deramo C."/>
            <person name="Delgado O."/>
            <person name="Dugan-Rocha S."/>
            <person name="Miner G."/>
            <person name="Morgan M."/>
            <person name="Hawes A."/>
            <person name="Gill R."/>
            <person name="Holt R.A."/>
            <person name="Adams M.D."/>
            <person name="Amanatides P.G."/>
            <person name="Baden-Tillson H."/>
            <person name="Barnstead M."/>
            <person name="Chin S."/>
            <person name="Evans C.A."/>
            <person name="Ferriera S."/>
            <person name="Fosler C."/>
            <person name="Glodek A."/>
            <person name="Gu Z."/>
            <person name="Jennings D."/>
            <person name="Kraft C.L."/>
            <person name="Nguyen T."/>
            <person name="Pfannkoch C.M."/>
            <person name="Sitter C."/>
            <person name="Sutton G.G."/>
            <person name="Venter J.C."/>
            <person name="Woodage T."/>
            <person name="Smith D."/>
            <person name="Lee H.-M."/>
            <person name="Gustafson E."/>
            <person name="Cahill P."/>
            <person name="Kana A."/>
            <person name="Doucette-Stamm L."/>
            <person name="Weinstock K."/>
            <person name="Fechtel K."/>
            <person name="Weiss R.B."/>
            <person name="Dunn D.M."/>
            <person name="Green E.D."/>
            <person name="Blakesley R.W."/>
            <person name="Bouffard G.G."/>
            <person name="De Jong P.J."/>
            <person name="Osoegawa K."/>
            <person name="Zhu B."/>
            <person name="Marra M."/>
            <person name="Schein J."/>
            <person name="Bosdet I."/>
            <person name="Fjell C."/>
            <person name="Jones S."/>
            <person name="Krzywinski M."/>
            <person name="Mathewson C."/>
            <person name="Siddiqui A."/>
            <person name="Wye N."/>
            <person name="McPherson J."/>
            <person name="Zhao S."/>
            <person name="Fraser C.M."/>
            <person name="Shetty J."/>
            <person name="Shatsman S."/>
            <person name="Geer K."/>
            <person name="Chen Y."/>
            <person name="Abramzon S."/>
            <person name="Nierman W.C."/>
            <person name="Havlak P.H."/>
            <person name="Chen R."/>
            <person name="Durbin K.J."/>
            <person name="Egan A."/>
            <person name="Ren Y."/>
            <person name="Song X.-Z."/>
            <person name="Li B."/>
            <person name="Liu Y."/>
            <person name="Qin X."/>
            <person name="Cawley S."/>
            <person name="Cooney A.J."/>
            <person name="D'Souza L.M."/>
            <person name="Martin K."/>
            <person name="Wu J.Q."/>
            <person name="Gonzalez-Garay M.L."/>
            <person name="Jackson A.R."/>
            <person name="Kalafus K.J."/>
            <person name="McLeod M.P."/>
            <person name="Milosavljevic A."/>
            <person name="Virk D."/>
            <person name="Volkov A."/>
            <person name="Wheeler D.A."/>
            <person name="Zhang Z."/>
            <person name="Bailey J.A."/>
            <person name="Eichler E.E."/>
            <person name="Tuzun E."/>
            <person name="Birney E."/>
            <person name="Mongin E."/>
            <person name="Ureta-Vidal A."/>
            <person name="Woodwark C."/>
            <person name="Zdobnov E."/>
            <person name="Bork P."/>
            <person name="Suyama M."/>
            <person name="Torrents D."/>
            <person name="Alexandersson M."/>
            <person name="Trask B.J."/>
            <person name="Young J.M."/>
            <person name="Huang H."/>
            <person name="Wang H."/>
            <person name="Xing H."/>
            <person name="Daniels S."/>
            <person name="Gietzen D."/>
            <person name="Schmidt J."/>
            <person name="Stevens K."/>
            <person name="Vitt U."/>
            <person name="Wingrove J."/>
            <person name="Camara F."/>
            <person name="Mar Alba M."/>
            <person name="Abril J.F."/>
            <person name="Guigo R."/>
            <person name="Smit A."/>
            <person name="Dubchak I."/>
            <person name="Rubin E.M."/>
            <person name="Couronne O."/>
            <person name="Poliakov A."/>
            <person name="Huebner N."/>
            <person name="Ganten D."/>
            <person name="Goesele C."/>
            <person name="Hummel O."/>
            <person name="Kreitler T."/>
            <person name="Lee Y.-A."/>
            <person name="Monti J."/>
            <person name="Schulz H."/>
            <person name="Zimdahl H."/>
            <person name="Himmelbauer H."/>
            <person name="Lehrach H."/>
            <person name="Jacob H.J."/>
            <person name="Bromberg S."/>
            <person name="Gullings-Handley J."/>
            <person name="Jensen-Seaman M.I."/>
            <person name="Kwitek A.E."/>
            <person name="Lazar J."/>
            <person name="Pasko D."/>
            <person name="Tonellato P.J."/>
            <person name="Twigger S."/>
            <person name="Ponting C.P."/>
            <person name="Duarte J.M."/>
            <person name="Rice S."/>
            <person name="Goodstadt L."/>
            <person name="Beatson S.A."/>
            <person name="Emes R.D."/>
            <person name="Winter E.E."/>
            <person name="Webber C."/>
            <person name="Brandt P."/>
            <person name="Nyakatura G."/>
            <person name="Adetobi M."/>
            <person name="Chiaromonte F."/>
            <person name="Elnitski L."/>
            <person name="Eswara P."/>
            <person name="Hardison R.C."/>
            <person name="Hou M."/>
            <person name="Kolbe D."/>
            <person name="Makova K."/>
            <person name="Miller W."/>
            <person name="Nekrutenko A."/>
            <person name="Riemer C."/>
            <person name="Schwartz S."/>
            <person name="Taylor J."/>
            <person name="Yang S."/>
            <person name="Zhang Y."/>
            <person name="Lindpaintner K."/>
            <person name="Andrews T.D."/>
            <person name="Caccamo M."/>
            <person name="Clamp M."/>
            <person name="Clarke L."/>
            <person name="Curwen V."/>
            <person name="Durbin R.M."/>
            <person name="Eyras E."/>
            <person name="Searle S.M."/>
            <person name="Cooper G.M."/>
            <person name="Batzoglou S."/>
            <person name="Brudno M."/>
            <person name="Sidow A."/>
            <person name="Stone E.A."/>
            <person name="Payseur B.A."/>
            <person name="Bourque G."/>
            <person name="Lopez-Otin C."/>
            <person name="Puente X.S."/>
            <person name="Chakrabarti K."/>
            <person name="Chatterji S."/>
            <person name="Dewey C."/>
            <person name="Pachter L."/>
            <person name="Bray N."/>
            <person name="Yap V.B."/>
            <person name="Caspi A."/>
            <person name="Tesler G."/>
            <person name="Pevzner P.A."/>
            <person name="Haussler D."/>
            <person name="Roskin K.M."/>
            <person name="Baertsch R."/>
            <person name="Clawson H."/>
            <person name="Furey T.S."/>
            <person name="Hinrichs A.S."/>
            <person name="Karolchik D."/>
            <person name="Kent W.J."/>
            <person name="Rosenbloom K.R."/>
            <person name="Trumbower H."/>
            <person name="Weirauch M."/>
            <person name="Cooper D.N."/>
            <person name="Stenson P.D."/>
            <person name="Ma B."/>
            <person name="Brent M."/>
            <person name="Arumugam M."/>
            <person name="Shteynberg D."/>
            <person name="Copley R.R."/>
            <person name="Taylor M.S."/>
            <person name="Riethman H."/>
            <person name="Mudunuri U."/>
            <person name="Peterson J."/>
            <person name="Guyer M."/>
            <person name="Felsenfeld A."/>
            <person name="Old S."/>
            <person name="Mockrin S."/>
            <person name="Collins F.S."/>
        </authorList>
    </citation>
    <scope>NUCLEOTIDE SEQUENCE [LARGE SCALE GENOMIC DNA]</scope>
    <source>
        <strain evidence="12">Brown Norway</strain>
    </source>
</reference>
<reference evidence="11" key="3">
    <citation type="submission" date="2005-07" db="EMBL/GenBank/DDBJ databases">
        <authorList>
            <person name="Mural R.J."/>
            <person name="Adams M.D."/>
            <person name="Myers E.W."/>
            <person name="Smith H.O."/>
            <person name="Venter J.C."/>
        </authorList>
    </citation>
    <scope>NUCLEOTIDE SEQUENCE [LARGE SCALE GENOMIC DNA]</scope>
</reference>
<reference evidence="10" key="4">
    <citation type="journal article" date="2004" name="Genome Res.">
        <title>The status, quality, and expansion of the NIH full-length cDNA project: the Mammalian Gene Collection (MGC).</title>
        <authorList>
            <consortium name="The MGC Project Team"/>
        </authorList>
    </citation>
    <scope>NUCLEOTIDE SEQUENCE [LARGE SCALE MRNA]</scope>
    <source>
        <tissue evidence="10">Kidney</tissue>
    </source>
</reference>
<reference evidence="8" key="5">
    <citation type="journal article" date="2012" name="Mol. Cell">
        <title>Molecular machinery for insertion of tail-anchored membrane proteins into the endoplasmic reticulum membrane in mammalian cells.</title>
        <authorList>
            <person name="Yamamoto Y."/>
            <person name="Sakisaka T."/>
        </authorList>
    </citation>
    <scope>FUNCTION</scope>
    <scope>IDENTIFICATION IN GET COMPLEX</scope>
    <scope>INTERACTION WITH GET1 AND GET3</scope>
</reference>
<evidence type="ECO:0000250" key="1">
    <source>
        <dbReference type="UniProtKB" id="P49069"/>
    </source>
</evidence>
<evidence type="ECO:0000250" key="2">
    <source>
        <dbReference type="UniProtKB" id="P49070"/>
    </source>
</evidence>
<evidence type="ECO:0000255" key="3"/>
<evidence type="ECO:0000256" key="4">
    <source>
        <dbReference type="SAM" id="MobiDB-lite"/>
    </source>
</evidence>
<evidence type="ECO:0000269" key="5">
    <source>
    </source>
</evidence>
<evidence type="ECO:0000269" key="6">
    <source>
    </source>
</evidence>
<evidence type="ECO:0000303" key="7">
    <source>
    </source>
</evidence>
<evidence type="ECO:0000305" key="8"/>
<evidence type="ECO:0000312" key="9">
    <source>
        <dbReference type="EMBL" id="AAG21394.1"/>
    </source>
</evidence>
<evidence type="ECO:0000312" key="10">
    <source>
        <dbReference type="EMBL" id="AAH76377.1"/>
    </source>
</evidence>
<evidence type="ECO:0000312" key="11">
    <source>
        <dbReference type="EMBL" id="EDL93961.1"/>
    </source>
</evidence>
<evidence type="ECO:0000312" key="12">
    <source>
        <dbReference type="Proteomes" id="UP000002494"/>
    </source>
</evidence>
<evidence type="ECO:0000312" key="13">
    <source>
        <dbReference type="RGD" id="69297"/>
    </source>
</evidence>
<sequence length="295" mass="32790">MEPMPSATDGGDRSATPSGLSASQRRAELRRRKLLMNSEQRINRIMGFHRPGSGAEEENQTKSKPLDSDILNPLGVPSVSKRVVLGDSVDGGVTDYQPSGGADIRGAQLGDKLDSFIKAPECSSKDGVELRQRNRGDLTADSAPRGSHHGLEQYLSRFEEAMKLRKQLISEKPSQEDGRTTEEFDSFRIFRLVGCALLALVVRAFVCKYLSIFAPFLTLQLAYMGLYKYFPKGEKKVKTTVLTAALLLSGIPAEVINRSMDTYSKMGEVFTDLCVYFFTFIFCHEVLEYWGPEVP</sequence>
<feature type="chain" id="PRO_0000452582" description="Guided entry of tail-anchored proteins factor CAMLG">
    <location>
        <begin position="1"/>
        <end position="295"/>
    </location>
</feature>
<feature type="topological domain" description="Cytoplasmic" evidence="1">
    <location>
        <begin position="1"/>
        <end position="188"/>
    </location>
</feature>
<feature type="transmembrane region" description="Helical" evidence="3">
    <location>
        <begin position="189"/>
        <end position="206"/>
    </location>
</feature>
<feature type="topological domain" description="Lumenal" evidence="1">
    <location>
        <begin position="207"/>
        <end position="208"/>
    </location>
</feature>
<feature type="transmembrane region" description="Helical" evidence="3">
    <location>
        <begin position="209"/>
        <end position="227"/>
    </location>
</feature>
<feature type="topological domain" description="Cytoplasmic" evidence="1">
    <location>
        <begin position="228"/>
        <end position="268"/>
    </location>
</feature>
<feature type="transmembrane region" description="Helical" evidence="3">
    <location>
        <begin position="269"/>
        <end position="287"/>
    </location>
</feature>
<feature type="topological domain" description="Lumenal" evidence="1">
    <location>
        <begin position="288"/>
        <end position="295"/>
    </location>
</feature>
<feature type="region of interest" description="Disordered" evidence="4">
    <location>
        <begin position="1"/>
        <end position="73"/>
    </location>
</feature>
<feature type="region of interest" description="Disordered" evidence="4">
    <location>
        <begin position="127"/>
        <end position="148"/>
    </location>
</feature>
<feature type="compositionally biased region" description="Polar residues" evidence="4">
    <location>
        <begin position="15"/>
        <end position="24"/>
    </location>
</feature>
<feature type="compositionally biased region" description="Basic and acidic residues" evidence="4">
    <location>
        <begin position="127"/>
        <end position="138"/>
    </location>
</feature>
<feature type="modified residue" description="Phosphoserine" evidence="1">
    <location>
        <position position="53"/>
    </location>
</feature>
<feature type="disulfide bond" evidence="1">
    <location>
        <begin position="207"/>
        <end position="283"/>
    </location>
</feature>
<feature type="sequence conflict" description="In Ref. 1; AAG21394." evidence="8" ref="1">
    <original>T</original>
    <variation>A</variation>
    <location>
        <position position="16"/>
    </location>
</feature>
<feature type="sequence conflict" description="In Ref. 1; AAG21394." evidence="8" ref="1">
    <location>
        <position position="57"/>
    </location>
</feature>
<organism evidence="10">
    <name type="scientific">Rattus norvegicus</name>
    <name type="common">Rat</name>
    <dbReference type="NCBI Taxonomy" id="10116"/>
    <lineage>
        <taxon>Eukaryota</taxon>
        <taxon>Metazoa</taxon>
        <taxon>Chordata</taxon>
        <taxon>Craniata</taxon>
        <taxon>Vertebrata</taxon>
        <taxon>Euteleostomi</taxon>
        <taxon>Mammalia</taxon>
        <taxon>Eutheria</taxon>
        <taxon>Euarchontoglires</taxon>
        <taxon>Glires</taxon>
        <taxon>Rodentia</taxon>
        <taxon>Myomorpha</taxon>
        <taxon>Muroidea</taxon>
        <taxon>Muridae</taxon>
        <taxon>Murinae</taxon>
        <taxon>Rattus</taxon>
    </lineage>
</organism>
<gene>
    <name evidence="13" type="primary">Camlg</name>
    <name evidence="7" type="synonym">Caml</name>
    <name evidence="1" type="synonym">Get2</name>
</gene>